<keyword id="KW-0472">Membrane</keyword>
<keyword id="KW-0496">Mitochondrion</keyword>
<keyword id="KW-1000">Mitochondrion outer membrane</keyword>
<keyword id="KW-1185">Reference proteome</keyword>
<keyword id="KW-0812">Transmembrane</keyword>
<keyword id="KW-1134">Transmembrane beta strand</keyword>
<feature type="chain" id="PRO_0000384175" description="Mitochondrial distribution and morphology protein 10">
    <location>
        <begin position="1"/>
        <end position="448"/>
    </location>
</feature>
<feature type="region of interest" description="Disordered" evidence="2">
    <location>
        <begin position="101"/>
        <end position="126"/>
    </location>
</feature>
<feature type="region of interest" description="Disordered" evidence="2">
    <location>
        <begin position="366"/>
        <end position="386"/>
    </location>
</feature>
<feature type="compositionally biased region" description="Basic and acidic residues" evidence="2">
    <location>
        <begin position="112"/>
        <end position="126"/>
    </location>
</feature>
<proteinExistence type="inferred from homology"/>
<comment type="function">
    <text evidence="1">Component of the ERMES/MDM complex, which serves as a molecular tether to connect the endoplasmic reticulum and mitochondria. Components of this complex are involved in the control of mitochondrial shape and protein biogenesis and may function in phospholipid exchange. MDM10 is involved in the late assembly steps of the general translocase of the mitochondrial outer membrane (TOM complex). Functions in the TOM40-specific route of the assembly of outer membrane beta-barrel proteins, including the association of TOM40 with the receptor TOM22 and small TOM proteins. Can associate with the SAM(core) complex as well as the MDM12-MMM1 complex, both involved in late steps of the major beta-barrel assembly pathway, that is responsible for biogenesis of all outer membrane beta-barrel proteins. May act as a switch that shuttles between both complexes and channels precursor proteins into the TOM40-specific pathway. Plays a role in mitochondrial morphology and in the inheritance of mitochondria.</text>
</comment>
<comment type="subunit">
    <text evidence="1">Component of the ER-mitochondria encounter structure (ERMES) or MDM complex, composed of MMM1, MDM10, MDM12 and MDM34. Associates with the mitochondrial outer membrane sorting assembly machinery SAM(core) complex.</text>
</comment>
<comment type="subcellular location">
    <subcellularLocation>
        <location evidence="1">Mitochondrion outer membrane</location>
        <topology evidence="1">Multi-pass membrane protein</topology>
    </subcellularLocation>
    <text evidence="1">The ERMES/MDM complex localizes to a few discrete foci (around 10 per single cell), that represent mitochondria-endoplasmic reticulum junctions. These foci are often found next to mtDNA nucleoids.</text>
</comment>
<comment type="domain">
    <text>Lacks alpha-helical transmembrane segments, suggesting that it resides in the membrane via beta-sheet conformations similar to those predicted for other outer membrane proteins and porin.</text>
</comment>
<comment type="similarity">
    <text evidence="1">Belongs to the MDM10 family.</text>
</comment>
<dbReference type="EMBL" id="GG704915">
    <property type="protein sequence ID" value="EAS28156.1"/>
    <property type="molecule type" value="Genomic_DNA"/>
</dbReference>
<dbReference type="RefSeq" id="XP_001239739.1">
    <property type="nucleotide sequence ID" value="XM_001239738.2"/>
</dbReference>
<dbReference type="SMR" id="Q1DK03"/>
<dbReference type="FunCoup" id="Q1DK03">
    <property type="interactions" value="52"/>
</dbReference>
<dbReference type="STRING" id="246410.Q1DK03"/>
<dbReference type="GeneID" id="4558737"/>
<dbReference type="KEGG" id="cim:CIMG_09360"/>
<dbReference type="VEuPathDB" id="FungiDB:CIMG_09360"/>
<dbReference type="InParanoid" id="Q1DK03"/>
<dbReference type="OMA" id="VPGYRQI"/>
<dbReference type="OrthoDB" id="2103793at2759"/>
<dbReference type="Proteomes" id="UP000001261">
    <property type="component" value="Unassembled WGS sequence"/>
</dbReference>
<dbReference type="GO" id="GO:0032865">
    <property type="term" value="C:ERMES complex"/>
    <property type="evidence" value="ECO:0007669"/>
    <property type="project" value="UniProtKB-UniRule"/>
</dbReference>
<dbReference type="GO" id="GO:0001401">
    <property type="term" value="C:SAM complex"/>
    <property type="evidence" value="ECO:0007669"/>
    <property type="project" value="TreeGrafter"/>
</dbReference>
<dbReference type="GO" id="GO:0051654">
    <property type="term" value="P:establishment of mitochondrion localization"/>
    <property type="evidence" value="ECO:0007669"/>
    <property type="project" value="TreeGrafter"/>
</dbReference>
<dbReference type="GO" id="GO:0000002">
    <property type="term" value="P:mitochondrial genome maintenance"/>
    <property type="evidence" value="ECO:0007669"/>
    <property type="project" value="UniProtKB-UniRule"/>
</dbReference>
<dbReference type="GO" id="GO:0070096">
    <property type="term" value="P:mitochondrial outer membrane translocase complex assembly"/>
    <property type="evidence" value="ECO:0007669"/>
    <property type="project" value="UniProtKB-UniRule"/>
</dbReference>
<dbReference type="GO" id="GO:1990456">
    <property type="term" value="P:mitochondrion-endoplasmic reticulum membrane tethering"/>
    <property type="evidence" value="ECO:0007669"/>
    <property type="project" value="UniProtKB-UniRule"/>
</dbReference>
<dbReference type="GO" id="GO:0015914">
    <property type="term" value="P:phospholipid transport"/>
    <property type="evidence" value="ECO:0007669"/>
    <property type="project" value="TreeGrafter"/>
</dbReference>
<dbReference type="GO" id="GO:0045040">
    <property type="term" value="P:protein insertion into mitochondrial outer membrane"/>
    <property type="evidence" value="ECO:0007669"/>
    <property type="project" value="UniProtKB-UniRule"/>
</dbReference>
<dbReference type="HAMAP" id="MF_03102">
    <property type="entry name" value="Mdm10"/>
    <property type="match status" value="1"/>
</dbReference>
<dbReference type="InterPro" id="IPR027539">
    <property type="entry name" value="Mdm10"/>
</dbReference>
<dbReference type="PANTHER" id="PTHR28035">
    <property type="entry name" value="MITOCHONDRIAL DISTRIBUTION AND MORPHOLOGY PROTEIN 10"/>
    <property type="match status" value="1"/>
</dbReference>
<dbReference type="PANTHER" id="PTHR28035:SF1">
    <property type="entry name" value="MITOCHONDRIAL DISTRIBUTION AND MORPHOLOGY PROTEIN 10"/>
    <property type="match status" value="1"/>
</dbReference>
<dbReference type="Pfam" id="PF12519">
    <property type="entry name" value="MDM10"/>
    <property type="match status" value="2"/>
</dbReference>
<name>MDM10_COCIM</name>
<organism>
    <name type="scientific">Coccidioides immitis (strain RS)</name>
    <name type="common">Valley fever fungus</name>
    <dbReference type="NCBI Taxonomy" id="246410"/>
    <lineage>
        <taxon>Eukaryota</taxon>
        <taxon>Fungi</taxon>
        <taxon>Dikarya</taxon>
        <taxon>Ascomycota</taxon>
        <taxon>Pezizomycotina</taxon>
        <taxon>Eurotiomycetes</taxon>
        <taxon>Eurotiomycetidae</taxon>
        <taxon>Onygenales</taxon>
        <taxon>Onygenaceae</taxon>
        <taxon>Coccidioides</taxon>
    </lineage>
</organism>
<accession>Q1DK03</accession>
<accession>A0A0D6K9M5</accession>
<accession>J3K2W7</accession>
<gene>
    <name evidence="1" type="primary">MDM10</name>
    <name type="ORF">CIMG_09360</name>
</gene>
<sequence>MIDFMDYIQLTFSDATHWNRDNSYTALTDTANALLDFSIPERLRVHLSSLSTPQFATTYTLGTVGLIDGSISYLFSTLPLESTPSRSTLIPLRRLVPGYRQIHPPLAPESPNESRHAEPNERSEKALQSWRKETMLHATLHLPPPTTLNGLFLRRISPTTQLSLAVCSTQATPLSKSTPQASILTQLSHDTGKYSAEFLFSTDNALLGFKGLWNFGPDPRHAATAQRPRTASQSVSLLSAGGEMYYSPLSSVVGLSTGLRFTTLPAASESTHSSSSTHPAQSPISTFPYTLTLTLTPLTGSLSTTYSLLASPNLAFSSRFGFNVYSWESEMVAGCELWRRKKKRHASTLSDKDDLSWAKRKMGLLPPLPPSPVKGTSASAVTPAGEQKESDSVIKLRVDQSLNVRLLWEGRVKDLLVSAGVGLGPSLPSIGGTTYGWTGVGVSVLYST</sequence>
<protein>
    <recommendedName>
        <fullName evidence="1">Mitochondrial distribution and morphology protein 10</fullName>
    </recommendedName>
    <alternativeName>
        <fullName evidence="1">Mitochondrial inheritance component MDM10</fullName>
    </alternativeName>
</protein>
<evidence type="ECO:0000255" key="1">
    <source>
        <dbReference type="HAMAP-Rule" id="MF_03102"/>
    </source>
</evidence>
<evidence type="ECO:0000256" key="2">
    <source>
        <dbReference type="SAM" id="MobiDB-lite"/>
    </source>
</evidence>
<reference key="1">
    <citation type="journal article" date="2009" name="Genome Res.">
        <title>Comparative genomic analyses of the human fungal pathogens Coccidioides and their relatives.</title>
        <authorList>
            <person name="Sharpton T.J."/>
            <person name="Stajich J.E."/>
            <person name="Rounsley S.D."/>
            <person name="Gardner M.J."/>
            <person name="Wortman J.R."/>
            <person name="Jordar V.S."/>
            <person name="Maiti R."/>
            <person name="Kodira C.D."/>
            <person name="Neafsey D.E."/>
            <person name="Zeng Q."/>
            <person name="Hung C.-Y."/>
            <person name="McMahan C."/>
            <person name="Muszewska A."/>
            <person name="Grynberg M."/>
            <person name="Mandel M.A."/>
            <person name="Kellner E.M."/>
            <person name="Barker B.M."/>
            <person name="Galgiani J.N."/>
            <person name="Orbach M.J."/>
            <person name="Kirkland T.N."/>
            <person name="Cole G.T."/>
            <person name="Henn M.R."/>
            <person name="Birren B.W."/>
            <person name="Taylor J.W."/>
        </authorList>
    </citation>
    <scope>NUCLEOTIDE SEQUENCE [LARGE SCALE GENOMIC DNA]</scope>
    <source>
        <strain>RS</strain>
    </source>
</reference>
<reference key="2">
    <citation type="journal article" date="2010" name="Genome Res.">
        <title>Population genomic sequencing of Coccidioides fungi reveals recent hybridization and transposon control.</title>
        <authorList>
            <person name="Neafsey D.E."/>
            <person name="Barker B.M."/>
            <person name="Sharpton T.J."/>
            <person name="Stajich J.E."/>
            <person name="Park D.J."/>
            <person name="Whiston E."/>
            <person name="Hung C.-Y."/>
            <person name="McMahan C."/>
            <person name="White J."/>
            <person name="Sykes S."/>
            <person name="Heiman D."/>
            <person name="Young S."/>
            <person name="Zeng Q."/>
            <person name="Abouelleil A."/>
            <person name="Aftuck L."/>
            <person name="Bessette D."/>
            <person name="Brown A."/>
            <person name="FitzGerald M."/>
            <person name="Lui A."/>
            <person name="Macdonald J.P."/>
            <person name="Priest M."/>
            <person name="Orbach M.J."/>
            <person name="Galgiani J.N."/>
            <person name="Kirkland T.N."/>
            <person name="Cole G.T."/>
            <person name="Birren B.W."/>
            <person name="Henn M.R."/>
            <person name="Taylor J.W."/>
            <person name="Rounsley S.D."/>
        </authorList>
    </citation>
    <scope>GENOME REANNOTATION</scope>
    <source>
        <strain>RS</strain>
    </source>
</reference>